<keyword id="KW-0007">Acetylation</keyword>
<keyword id="KW-1003">Cell membrane</keyword>
<keyword id="KW-0963">Cytoplasm</keyword>
<keyword id="KW-0472">Membrane</keyword>
<keyword id="KW-0488">Methylation</keyword>
<keyword id="KW-0597">Phosphoprotein</keyword>
<keyword id="KW-1185">Reference proteome</keyword>
<keyword id="KW-0694">RNA-binding</keyword>
<gene>
    <name type="primary">FAM120A</name>
    <name type="synonym">Kiaa0183</name>
    <name type="synonym">Ossa</name>
</gene>
<comment type="function">
    <text evidence="1">Component of the oxidative stress-induced survival signaling. May regulate the activation of SRC family protein kinases. May act as a scaffolding protein enabling SRC family protein kinases to phosphorylate and activate PI3-kinase. Binds IGF2 RNA and promotes the production of IGF2 protein.</text>
</comment>
<comment type="subunit">
    <text evidence="1 3">Interacts with PURA (PubMed:18413649). Interacts with SRC family protein kinases YES1, SRC and FYN. Upon tyrosine phosphorylation, interacts with PIK3R1. Interacts with IGF2BP1/IMP-1 in an RNA-dependent manner (By similarity).</text>
</comment>
<comment type="subcellular location">
    <subcellularLocation>
        <location evidence="1">Cytoplasm</location>
    </subcellularLocation>
    <subcellularLocation>
        <location evidence="1">Cell membrane</location>
        <topology evidence="1">Peripheral membrane protein</topology>
        <orientation evidence="1">Cytoplasmic side</orientation>
    </subcellularLocation>
    <text evidence="1">Translocates from the cytosol to plasma membrane after UV irradiation.</text>
</comment>
<comment type="tissue specificity">
    <text evidence="3">In the brain, predominantly expressed in the hippocampus, caudate putamen, cerebral cortex and cerebellum. Expression is restricted to neurons (at protein level).</text>
</comment>
<comment type="developmental stage">
    <text evidence="3">Expressed in the developing brain at 12 dpc. Expression increases postnatally and is maintained at an adult level beyond 4 weeks after birth (at protein level).</text>
</comment>
<comment type="PTM">
    <text evidence="1">Arg-980 is dimethylated, probably to asymmetric dimethylarginine.</text>
</comment>
<comment type="PTM">
    <text evidence="1">Phosphorylated on tyrosine by src family kinases upon ultraviolet exposure.</text>
</comment>
<comment type="similarity">
    <text evidence="4">Belongs to the constitutive coactivator of PPAR-gamma family.</text>
</comment>
<comment type="sequence caution" evidence="4">
    <conflict type="erroneous initiation">
        <sequence resource="EMBL-CDS" id="BAD32187"/>
    </conflict>
    <text>Extended N-terminus.</text>
</comment>
<dbReference type="EMBL" id="AK172909">
    <property type="protein sequence ID" value="BAD32187.1"/>
    <property type="status" value="ALT_INIT"/>
    <property type="molecule type" value="mRNA"/>
</dbReference>
<dbReference type="EMBL" id="BC010304">
    <property type="protein sequence ID" value="AAH10304.1"/>
    <property type="molecule type" value="mRNA"/>
</dbReference>
<dbReference type="EMBL" id="BC042582">
    <property type="protein sequence ID" value="AAH42582.1"/>
    <property type="molecule type" value="mRNA"/>
</dbReference>
<dbReference type="EMBL" id="BC158134">
    <property type="protein sequence ID" value="AAI58135.1"/>
    <property type="molecule type" value="mRNA"/>
</dbReference>
<dbReference type="CCDS" id="CCDS49259.1"/>
<dbReference type="RefSeq" id="NP_001028440.2">
    <property type="nucleotide sequence ID" value="NM_001033268.2"/>
</dbReference>
<dbReference type="BioGRID" id="230005">
    <property type="interactions" value="19"/>
</dbReference>
<dbReference type="FunCoup" id="Q6A0A9">
    <property type="interactions" value="4902"/>
</dbReference>
<dbReference type="IntAct" id="Q6A0A9">
    <property type="interactions" value="9"/>
</dbReference>
<dbReference type="MINT" id="Q6A0A9"/>
<dbReference type="STRING" id="10090.ENSMUSP00000053877"/>
<dbReference type="GlyGen" id="Q6A0A9">
    <property type="glycosylation" value="3 sites, 1 N-linked glycan (1 site), 1 O-linked glycan (1 site)"/>
</dbReference>
<dbReference type="iPTMnet" id="Q6A0A9"/>
<dbReference type="PhosphoSitePlus" id="Q6A0A9"/>
<dbReference type="SwissPalm" id="Q6A0A9"/>
<dbReference type="jPOST" id="Q6A0A9"/>
<dbReference type="PaxDb" id="10090-ENSMUSP00000053877"/>
<dbReference type="PeptideAtlas" id="Q6A0A9"/>
<dbReference type="ProteomicsDB" id="275494"/>
<dbReference type="Pumba" id="Q6A0A9"/>
<dbReference type="Antibodypedia" id="13858">
    <property type="antibodies" value="129 antibodies from 30 providers"/>
</dbReference>
<dbReference type="DNASU" id="218236"/>
<dbReference type="Ensembl" id="ENSMUST00000060805.7">
    <property type="protein sequence ID" value="ENSMUSP00000053877.7"/>
    <property type="gene ID" value="ENSMUSG00000038014.8"/>
</dbReference>
<dbReference type="GeneID" id="218236"/>
<dbReference type="KEGG" id="mmu:218236"/>
<dbReference type="UCSC" id="uc007qio.1">
    <property type="organism name" value="mouse"/>
</dbReference>
<dbReference type="AGR" id="MGI:2446163"/>
<dbReference type="CTD" id="23196"/>
<dbReference type="MGI" id="MGI:2446163">
    <property type="gene designation" value="Fam120a"/>
</dbReference>
<dbReference type="VEuPathDB" id="HostDB:ENSMUSG00000038014"/>
<dbReference type="eggNOG" id="ENOG502QQNQ">
    <property type="taxonomic scope" value="Eukaryota"/>
</dbReference>
<dbReference type="GeneTree" id="ENSGT00530000063168"/>
<dbReference type="HOGENOM" id="CLU_008339_2_0_1"/>
<dbReference type="InParanoid" id="Q6A0A9"/>
<dbReference type="OMA" id="YILSPQY"/>
<dbReference type="OrthoDB" id="10061469at2759"/>
<dbReference type="PhylomeDB" id="Q6A0A9"/>
<dbReference type="TreeFam" id="TF328642"/>
<dbReference type="BioGRID-ORCS" id="218236">
    <property type="hits" value="5 hits in 79 CRISPR screens"/>
</dbReference>
<dbReference type="CD-CODE" id="CE726F99">
    <property type="entry name" value="Postsynaptic density"/>
</dbReference>
<dbReference type="ChiTaRS" id="Fam120a">
    <property type="organism name" value="mouse"/>
</dbReference>
<dbReference type="PRO" id="PR:Q6A0A9"/>
<dbReference type="Proteomes" id="UP000000589">
    <property type="component" value="Chromosome 13"/>
</dbReference>
<dbReference type="RNAct" id="Q6A0A9">
    <property type="molecule type" value="protein"/>
</dbReference>
<dbReference type="Bgee" id="ENSMUSG00000038014">
    <property type="expression patterns" value="Expressed in ciliary body and 261 other cell types or tissues"/>
</dbReference>
<dbReference type="GO" id="GO:0005829">
    <property type="term" value="C:cytosol"/>
    <property type="evidence" value="ECO:0007669"/>
    <property type="project" value="Ensembl"/>
</dbReference>
<dbReference type="GO" id="GO:0005886">
    <property type="term" value="C:plasma membrane"/>
    <property type="evidence" value="ECO:0007669"/>
    <property type="project" value="UniProtKB-SubCell"/>
</dbReference>
<dbReference type="GO" id="GO:0003723">
    <property type="term" value="F:RNA binding"/>
    <property type="evidence" value="ECO:0007669"/>
    <property type="project" value="UniProtKB-KW"/>
</dbReference>
<dbReference type="FunFam" id="3.40.50.1010:FF:000009">
    <property type="entry name" value="Constitutive coactivator of PPAR-gamma-like protein 1"/>
    <property type="match status" value="1"/>
</dbReference>
<dbReference type="Gene3D" id="3.40.50.1010">
    <property type="entry name" value="5'-nuclease"/>
    <property type="match status" value="1"/>
</dbReference>
<dbReference type="InterPro" id="IPR026784">
    <property type="entry name" value="Coact_PPARg"/>
</dbReference>
<dbReference type="InterPro" id="IPR029060">
    <property type="entry name" value="PIN-like_dom_sf"/>
</dbReference>
<dbReference type="PANTHER" id="PTHR15976">
    <property type="entry name" value="CONSTITUTIVE COACTIVATOR OF PEROXISOME PROLIFERATOR-ACTIVATED RECEPTOR GAMMA"/>
    <property type="match status" value="1"/>
</dbReference>
<dbReference type="PANTHER" id="PTHR15976:SF14">
    <property type="entry name" value="CONSTITUTIVE COACTIVATOR OF PPAR-GAMMA-LIKE PROTEIN 1"/>
    <property type="match status" value="1"/>
</dbReference>
<dbReference type="SUPFAM" id="SSF88723">
    <property type="entry name" value="PIN domain-like"/>
    <property type="match status" value="1"/>
</dbReference>
<name>F120A_MOUSE</name>
<evidence type="ECO:0000250" key="1">
    <source>
        <dbReference type="UniProtKB" id="Q9NZB2"/>
    </source>
</evidence>
<evidence type="ECO:0000256" key="2">
    <source>
        <dbReference type="SAM" id="MobiDB-lite"/>
    </source>
</evidence>
<evidence type="ECO:0000269" key="3">
    <source>
    </source>
</evidence>
<evidence type="ECO:0000305" key="4"/>
<evidence type="ECO:0007744" key="5">
    <source>
    </source>
</evidence>
<evidence type="ECO:0007744" key="6">
    <source>
    </source>
</evidence>
<reference key="1">
    <citation type="journal article" date="2004" name="DNA Res.">
        <title>Prediction of the coding sequences of mouse homologues of KIAA gene: IV. The complete nucleotide sequences of 500 mouse KIAA-homologous cDNAs identified by screening of terminal sequences of cDNA clones randomly sampled from size-fractionated libraries.</title>
        <authorList>
            <person name="Okazaki N."/>
            <person name="Kikuno R."/>
            <person name="Ohara R."/>
            <person name="Inamoto S."/>
            <person name="Koseki H."/>
            <person name="Hiraoka S."/>
            <person name="Saga Y."/>
            <person name="Seino S."/>
            <person name="Nishimura M."/>
            <person name="Kaisho T."/>
            <person name="Hoshino K."/>
            <person name="Kitamura H."/>
            <person name="Nagase T."/>
            <person name="Ohara O."/>
            <person name="Koga H."/>
        </authorList>
    </citation>
    <scope>NUCLEOTIDE SEQUENCE [LARGE SCALE MRNA]</scope>
    <source>
        <tissue>Embryonic tail</tissue>
    </source>
</reference>
<reference key="2">
    <citation type="journal article" date="2004" name="Genome Res.">
        <title>The status, quality, and expansion of the NIH full-length cDNA project: the Mammalian Gene Collection (MGC).</title>
        <authorList>
            <consortium name="The MGC Project Team"/>
        </authorList>
    </citation>
    <scope>NUCLEOTIDE SEQUENCE [LARGE SCALE MRNA] OF 4-1112</scope>
    <source>
        <strain>FVB/N</strain>
        <tissue>Brain</tissue>
        <tissue>Mammary tumor</tissue>
    </source>
</reference>
<reference key="3">
    <citation type="journal article" date="2008" name="J. Histochem. Cytochem.">
        <title>C9orf10 protein, a novel protein component of Puralpha-containing mRNA-protein particles (Puralpha-mRNPs): characterization of developmental and regional expressions in the mouse brain.</title>
        <authorList>
            <person name="Kobayashi Y."/>
            <person name="Suzuki K."/>
            <person name="Kobayashi H."/>
            <person name="Ohashi S."/>
            <person name="Koike K."/>
            <person name="Macchi P."/>
            <person name="Kiebler M."/>
            <person name="Anzai K."/>
        </authorList>
    </citation>
    <scope>TISSUE SPECIFICITY</scope>
    <scope>DEVELOPMENTAL STAGE</scope>
    <scope>INTERACTION WITH PURA</scope>
</reference>
<reference key="4">
    <citation type="journal article" date="2010" name="Cell">
        <title>A tissue-specific atlas of mouse protein phosphorylation and expression.</title>
        <authorList>
            <person name="Huttlin E.L."/>
            <person name="Jedrychowski M.P."/>
            <person name="Elias J.E."/>
            <person name="Goswami T."/>
            <person name="Rad R."/>
            <person name="Beausoleil S.A."/>
            <person name="Villen J."/>
            <person name="Haas W."/>
            <person name="Sowa M.E."/>
            <person name="Gygi S.P."/>
        </authorList>
    </citation>
    <scope>IDENTIFICATION BY MASS SPECTROMETRY [LARGE SCALE ANALYSIS]</scope>
    <source>
        <tissue>Brain</tissue>
        <tissue>Brown adipose tissue</tissue>
        <tissue>Heart</tissue>
        <tissue>Kidney</tissue>
        <tissue>Liver</tissue>
        <tissue>Lung</tissue>
        <tissue>Pancreas</tissue>
        <tissue>Spleen</tissue>
        <tissue>Testis</tissue>
    </source>
</reference>
<reference key="5">
    <citation type="journal article" date="2013" name="Mol. Cell">
        <title>SIRT5-mediated lysine desuccinylation impacts diverse metabolic pathways.</title>
        <authorList>
            <person name="Park J."/>
            <person name="Chen Y."/>
            <person name="Tishkoff D.X."/>
            <person name="Peng C."/>
            <person name="Tan M."/>
            <person name="Dai L."/>
            <person name="Xie Z."/>
            <person name="Zhang Y."/>
            <person name="Zwaans B.M."/>
            <person name="Skinner M.E."/>
            <person name="Lombard D.B."/>
            <person name="Zhao Y."/>
        </authorList>
    </citation>
    <scope>ACETYLATION [LARGE SCALE ANALYSIS] AT LYS-930</scope>
    <scope>IDENTIFICATION BY MASS SPECTROMETRY [LARGE SCALE ANALYSIS]</scope>
    <source>
        <tissue>Embryonic fibroblast</tissue>
    </source>
</reference>
<reference key="6">
    <citation type="journal article" date="2014" name="Mol. Cell. Proteomics">
        <title>Immunoaffinity enrichment and mass spectrometry analysis of protein methylation.</title>
        <authorList>
            <person name="Guo A."/>
            <person name="Gu H."/>
            <person name="Zhou J."/>
            <person name="Mulhern D."/>
            <person name="Wang Y."/>
            <person name="Lee K.A."/>
            <person name="Yang V."/>
            <person name="Aguiar M."/>
            <person name="Kornhauser J."/>
            <person name="Jia X."/>
            <person name="Ren J."/>
            <person name="Beausoleil S.A."/>
            <person name="Silva J.C."/>
            <person name="Vemulapalli V."/>
            <person name="Bedford M.T."/>
            <person name="Comb M.J."/>
        </authorList>
    </citation>
    <scope>METHYLATION [LARGE SCALE ANALYSIS] AT ARG-871; ARG-882; ARG-884 AND ARG-980</scope>
    <scope>IDENTIFICATION BY MASS SPECTROMETRY [LARGE SCALE ANALYSIS]</scope>
    <source>
        <tissue>Brain</tissue>
        <tissue>Embryo</tissue>
    </source>
</reference>
<accession>Q6A0A9</accession>
<accession>A0PJK6</accession>
<accession>B3DFJ0</accession>
<accession>Q91Z16</accession>
<sequence>MGVQGFQDYIEKHCPSAVVPVELQKLARGSLVGGGRQRPPQTPLRLLVDADNCLHRLYGGFYTDWVSGGQWNHMLGYLAALAKACFGGNIELFVFFNGALEKARLHEWVKRQGNERQTAQQIVSHVQNKGTPPPKVWFLPPVCMAHCIRLALIRFHVKVAQSIEDHHQEVIGFCRENGFHGLVAYDSDYALCNIPYYFSAHALKLSRNGKSLTTSQYLMHEVAKQLDLNPNRFPIFAALLGNHILPDEDLASFHWSLLGPEHPLASLKVRAHQLVLPPCDVVIKAVADYVRNIHDTSDLDAIAKDVFQHSQSRTDDKVIRFKRAVGYYSATSKPMPFHPPHYLARPNPFGMPGMVPPYVPPQMLNIPQTSLQAKPAVPQVPSPGGTPGQAPYPYSLSEPALTLDTSGKNLTEQNSYSNIPHEGKHTPLYERSSPINLAQSGSPNHVDSAYFPGSSTSSSSDNDEGGGGATNHISGNKIGWEKTGSHAEPLARGDPGDQVKVEGSSTASSGSQLAEGKGSHMGTVQPIPCLLSMPTRNHMDITTPPLPPVAPEVLRVAEHRHKKGLMYPYIFHILTKGEIKIAVSIEDEANKDLPPAALLYRPVRQYVYGVLFSLAESRKKTERLAFRKNRLPPEFSPLIIKEWAAYKGKSPQTPELVEALAFREWTCPNLKRLWLGKAVEDKNRRMRAFLACMRSDTPAMLNPANVPTHLMVLCCVLRYMVQWPGARILRRQELDAFLAQALSPKLYEPDQLQELKIDNLDPRGIQLSALFMSGVDMALFANDACGQPIPWEHCCPWMYFDGKLFQSKLLKASREKTPLIDLCDGQAEQAAKVEKMRQSILEGLSFSRQNHPLPFPPPPALPFYPASVYPRHFGPVPPSQGRGRGFAGVCGFGGHYGETVATGPYRAFRVTAASGHCGAFSGSDSSRTSKSQGGVQPIPSQGGKLEIAGTVVGHWAGSRRGRGGRGPFPLQVVSVGGPARGRPRGVISTPVIRTFGRGGRYYGRGYKSQGAIQGRPPYAASAEEVAKELKSKSGESKSSAVSLAENGVMAEEKPVPQLNGSTGDPRVPSHSESALNNDSKPCNTNPHLNALSTDSACRREAALEAAVLNKEE</sequence>
<feature type="chain" id="PRO_0000363780" description="Constitutive coactivator of PPAR-gamma-like protein 1">
    <location>
        <begin position="1"/>
        <end position="1112"/>
    </location>
</feature>
<feature type="region of interest" description="Interaction with YES1, SRC and FYN" evidence="1">
    <location>
        <begin position="339"/>
        <end position="403"/>
    </location>
</feature>
<feature type="region of interest" description="Disordered" evidence="2">
    <location>
        <begin position="372"/>
        <end position="525"/>
    </location>
</feature>
<feature type="region of interest" description="RNA binding" evidence="1">
    <location>
        <begin position="827"/>
        <end position="1112"/>
    </location>
</feature>
<feature type="region of interest" description="Disordered" evidence="2">
    <location>
        <begin position="919"/>
        <end position="943"/>
    </location>
</feature>
<feature type="region of interest" description="Disordered" evidence="2">
    <location>
        <begin position="1030"/>
        <end position="1090"/>
    </location>
</feature>
<feature type="compositionally biased region" description="Polar residues" evidence="2">
    <location>
        <begin position="403"/>
        <end position="418"/>
    </location>
</feature>
<feature type="compositionally biased region" description="Polar residues" evidence="2">
    <location>
        <begin position="433"/>
        <end position="445"/>
    </location>
</feature>
<feature type="compositionally biased region" description="Basic and acidic residues" evidence="2">
    <location>
        <begin position="479"/>
        <end position="500"/>
    </location>
</feature>
<feature type="compositionally biased region" description="Polar residues" evidence="2">
    <location>
        <begin position="503"/>
        <end position="512"/>
    </location>
</feature>
<feature type="compositionally biased region" description="Polar residues" evidence="2">
    <location>
        <begin position="922"/>
        <end position="934"/>
    </location>
</feature>
<feature type="compositionally biased region" description="Polar residues" evidence="2">
    <location>
        <begin position="1070"/>
        <end position="1090"/>
    </location>
</feature>
<feature type="modified residue" description="Phosphothreonine" evidence="1">
    <location>
        <position position="653"/>
    </location>
</feature>
<feature type="modified residue" description="Omega-N-methylarginine" evidence="6">
    <location>
        <position position="871"/>
    </location>
</feature>
<feature type="modified residue" description="Omega-N-methylarginine" evidence="6">
    <location>
        <position position="882"/>
    </location>
</feature>
<feature type="modified residue" description="Omega-N-methylarginine" evidence="6">
    <location>
        <position position="884"/>
    </location>
</feature>
<feature type="modified residue" description="N6-acetyllysine" evidence="5">
    <location>
        <position position="930"/>
    </location>
</feature>
<feature type="modified residue" description="Phosphoserine" evidence="1">
    <location>
        <position position="958"/>
    </location>
</feature>
<feature type="modified residue" description="Omega-N-methylarginine" evidence="6">
    <location>
        <position position="980"/>
    </location>
</feature>
<feature type="modified residue" description="Omega-N-methylarginine" evidence="1">
    <location>
        <position position="984"/>
    </location>
</feature>
<feature type="modified residue" description="Phosphoserine" evidence="1">
    <location>
        <position position="1021"/>
    </location>
</feature>
<feature type="modified residue" description="Phosphoserine" evidence="1">
    <location>
        <position position="1042"/>
    </location>
</feature>
<organism>
    <name type="scientific">Mus musculus</name>
    <name type="common">Mouse</name>
    <dbReference type="NCBI Taxonomy" id="10090"/>
    <lineage>
        <taxon>Eukaryota</taxon>
        <taxon>Metazoa</taxon>
        <taxon>Chordata</taxon>
        <taxon>Craniata</taxon>
        <taxon>Vertebrata</taxon>
        <taxon>Euteleostomi</taxon>
        <taxon>Mammalia</taxon>
        <taxon>Eutheria</taxon>
        <taxon>Euarchontoglires</taxon>
        <taxon>Glires</taxon>
        <taxon>Rodentia</taxon>
        <taxon>Myomorpha</taxon>
        <taxon>Muroidea</taxon>
        <taxon>Muridae</taxon>
        <taxon>Murinae</taxon>
        <taxon>Mus</taxon>
        <taxon>Mus</taxon>
    </lineage>
</organism>
<proteinExistence type="evidence at protein level"/>
<protein>
    <recommendedName>
        <fullName>Constitutive coactivator of PPAR-gamma-like protein 1</fullName>
    </recommendedName>
    <alternativeName>
        <fullName>Oxidative stress-associated SRC activator</fullName>
    </alternativeName>
    <alternativeName>
        <fullName>Protein FAM120A</fullName>
    </alternativeName>
</protein>